<comment type="function">
    <text evidence="3">Biotin-containing subunit of the sodium ion pump methylmalonyl-CoA decarboxylase, which converts the chemical energy of a decarboxylation reaction into an electrochemical gradient of Na(+) ions across the cytoplasmic membrane, thereby creating a sodium ion motive force that is used for ATP synthesis.</text>
</comment>
<comment type="catalytic activity">
    <reaction evidence="3">
        <text>(S)-methylmalonyl-CoA + Na(+)(in) + H(+)(out) = propanoyl-CoA + Na(+)(out) + CO2</text>
        <dbReference type="Rhea" id="RHEA:21396"/>
        <dbReference type="ChEBI" id="CHEBI:15378"/>
        <dbReference type="ChEBI" id="CHEBI:16526"/>
        <dbReference type="ChEBI" id="CHEBI:29101"/>
        <dbReference type="ChEBI" id="CHEBI:57327"/>
        <dbReference type="ChEBI" id="CHEBI:57392"/>
        <dbReference type="EC" id="7.2.4.3"/>
    </reaction>
</comment>
<comment type="cofactor">
    <cofactor evidence="1">
        <name>biotin</name>
        <dbReference type="ChEBI" id="CHEBI:57586"/>
    </cofactor>
</comment>
<comment type="subunit">
    <text evidence="3">The methylmalonyl-CoA decarboxylase is composed of four subunits: the carboxyltransferase alpha subunit (MmdA), the tunnel beta subunit (MmdB), the biotin-containing gamma subunit (MmdC) and the delta subunit (MmdD).</text>
</comment>
<comment type="subcellular location">
    <subcellularLocation>
        <location evidence="3">Cell membrane</location>
    </subcellularLocation>
</comment>
<gene>
    <name evidence="4" type="primary">mmdC</name>
</gene>
<proteinExistence type="evidence at protein level"/>
<keyword id="KW-0092">Biotin</keyword>
<keyword id="KW-1003">Cell membrane</keyword>
<keyword id="KW-0406">Ion transport</keyword>
<keyword id="KW-0472">Membrane</keyword>
<keyword id="KW-0915">Sodium</keyword>
<keyword id="KW-0739">Sodium transport</keyword>
<keyword id="KW-1278">Translocase</keyword>
<keyword id="KW-0813">Transport</keyword>
<evidence type="ECO:0000255" key="1">
    <source>
        <dbReference type="PROSITE-ProRule" id="PRU01066"/>
    </source>
</evidence>
<evidence type="ECO:0000256" key="2">
    <source>
        <dbReference type="SAM" id="MobiDB-lite"/>
    </source>
</evidence>
<evidence type="ECO:0000269" key="3">
    <source>
    </source>
</evidence>
<evidence type="ECO:0000303" key="4">
    <source>
    </source>
</evidence>
<evidence type="ECO:0000305" key="5"/>
<protein>
    <recommendedName>
        <fullName evidence="5">Methylmalonyl-CoA decarboxylase subunit gamma</fullName>
        <ecNumber evidence="3">7.2.4.3</ecNumber>
    </recommendedName>
</protein>
<reference key="1">
    <citation type="journal article" date="1997" name="Eur. J. Biochem.">
        <title>Methylmalonyl-CoA decarboxylase from Propionigenium modestum--cloning and sequencing of the structural genes and purification of the enzyme complex.</title>
        <authorList>
            <person name="Bott M."/>
            <person name="Pfister K."/>
            <person name="Burda P."/>
            <person name="Kalbermatter O."/>
            <person name="Woehlke G."/>
            <person name="Dimroth P."/>
        </authorList>
    </citation>
    <scope>NUCLEOTIDE SEQUENCE [GENOMIC DNA]</scope>
    <scope>FUNCTION</scope>
    <scope>CATALYTIC ACTIVITY</scope>
    <scope>SUBUNIT</scope>
    <scope>SUBCELLULAR LOCATION</scope>
    <source>
        <strain>DSM 2376 / Gra Succ2</strain>
    </source>
</reference>
<sequence>MKNFKVTVNGTEYDVAVEEMGGAAVASAPAARPAAAPAPAAPKPAAAPAPAPAPKTTAAGAGAGANTVTAPMPGTILNVGCHAGDKVSKGDTLVVLEAMKMENEIMAPHDGVVSEVRVQQGASVNAGDILVVLS</sequence>
<organism>
    <name type="scientific">Propionigenium modestum</name>
    <dbReference type="NCBI Taxonomy" id="2333"/>
    <lineage>
        <taxon>Bacteria</taxon>
        <taxon>Fusobacteriati</taxon>
        <taxon>Fusobacteriota</taxon>
        <taxon>Fusobacteriia</taxon>
        <taxon>Fusobacteriales</taxon>
        <taxon>Fusobacteriaceae</taxon>
        <taxon>Propionigenium</taxon>
    </lineage>
</organism>
<dbReference type="EC" id="7.2.4.3" evidence="3"/>
<dbReference type="EMBL" id="AJ002015">
    <property type="protein sequence ID" value="CAA05139.1"/>
    <property type="molecule type" value="Genomic_DNA"/>
</dbReference>
<dbReference type="PIR" id="T44984">
    <property type="entry name" value="T44984"/>
</dbReference>
<dbReference type="SMR" id="O54030"/>
<dbReference type="KEGG" id="ag:CAA05139"/>
<dbReference type="GO" id="GO:0005886">
    <property type="term" value="C:plasma membrane"/>
    <property type="evidence" value="ECO:0007669"/>
    <property type="project" value="UniProtKB-SubCell"/>
</dbReference>
<dbReference type="GO" id="GO:0006814">
    <property type="term" value="P:sodium ion transport"/>
    <property type="evidence" value="ECO:0007669"/>
    <property type="project" value="UniProtKB-KW"/>
</dbReference>
<dbReference type="CDD" id="cd06850">
    <property type="entry name" value="biotinyl_domain"/>
    <property type="match status" value="1"/>
</dbReference>
<dbReference type="FunFam" id="2.40.50.100:FF:000003">
    <property type="entry name" value="Acetyl-CoA carboxylase biotin carboxyl carrier protein"/>
    <property type="match status" value="1"/>
</dbReference>
<dbReference type="Gene3D" id="2.40.50.100">
    <property type="match status" value="1"/>
</dbReference>
<dbReference type="InterPro" id="IPR001882">
    <property type="entry name" value="Biotin_BS"/>
</dbReference>
<dbReference type="InterPro" id="IPR050709">
    <property type="entry name" value="Biotin_Carboxyl_Carrier/Decarb"/>
</dbReference>
<dbReference type="InterPro" id="IPR000089">
    <property type="entry name" value="Biotin_lipoyl"/>
</dbReference>
<dbReference type="InterPro" id="IPR011053">
    <property type="entry name" value="Single_hybrid_motif"/>
</dbReference>
<dbReference type="PANTHER" id="PTHR45266">
    <property type="entry name" value="OXALOACETATE DECARBOXYLASE ALPHA CHAIN"/>
    <property type="match status" value="1"/>
</dbReference>
<dbReference type="PANTHER" id="PTHR45266:SF3">
    <property type="entry name" value="OXALOACETATE DECARBOXYLASE ALPHA CHAIN"/>
    <property type="match status" value="1"/>
</dbReference>
<dbReference type="Pfam" id="PF00364">
    <property type="entry name" value="Biotin_lipoyl"/>
    <property type="match status" value="1"/>
</dbReference>
<dbReference type="SUPFAM" id="SSF51230">
    <property type="entry name" value="Single hybrid motif"/>
    <property type="match status" value="1"/>
</dbReference>
<dbReference type="PROSITE" id="PS00188">
    <property type="entry name" value="BIOTIN"/>
    <property type="match status" value="1"/>
</dbReference>
<dbReference type="PROSITE" id="PS50968">
    <property type="entry name" value="BIOTINYL_LIPOYL"/>
    <property type="match status" value="1"/>
</dbReference>
<name>MMDC_PROMO</name>
<feature type="chain" id="PRO_0000453534" description="Methylmalonyl-CoA decarboxylase subunit gamma">
    <location>
        <begin position="1"/>
        <end position="134"/>
    </location>
</feature>
<feature type="domain" description="Biotinyl-binding" evidence="1">
    <location>
        <begin position="58"/>
        <end position="134"/>
    </location>
</feature>
<feature type="region of interest" description="Disordered" evidence="2">
    <location>
        <begin position="28"/>
        <end position="67"/>
    </location>
</feature>
<feature type="compositionally biased region" description="Low complexity" evidence="2">
    <location>
        <begin position="28"/>
        <end position="38"/>
    </location>
</feature>
<feature type="compositionally biased region" description="Pro residues" evidence="2">
    <location>
        <begin position="39"/>
        <end position="53"/>
    </location>
</feature>
<feature type="compositionally biased region" description="Low complexity" evidence="2">
    <location>
        <begin position="54"/>
        <end position="67"/>
    </location>
</feature>
<feature type="modified residue" description="N6-biotinyllysine" evidence="1">
    <location>
        <position position="100"/>
    </location>
</feature>
<accession>O54030</accession>